<protein>
    <recommendedName>
        <fullName>Uveal autoantigen with coiled-coil domains and ankyrin repeats</fullName>
    </recommendedName>
    <alternativeName>
        <fullName>Nuclear membrane-binding protein</fullName>
        <shortName>Nucling</shortName>
    </alternativeName>
</protein>
<reference key="1">
    <citation type="journal article" date="2003" name="J. Biochem.">
        <title>Identification of a novel, embryonal carcinoma cell-associated molecule, nucling, that is up-regulated during cardiac muscle differentiation.</title>
        <authorList>
            <person name="Sakai T."/>
            <person name="Liu L."/>
            <person name="Shishido Y."/>
            <person name="Fukui K."/>
        </authorList>
    </citation>
    <scope>NUCLEOTIDE SEQUENCE [MRNA] (ISOFORM 1)</scope>
    <scope>SUBCELLULAR LOCATION</scope>
    <scope>TISSUE SPECIFICITY</scope>
    <scope>DEVELOPMENTAL STAGE</scope>
    <scope>INDUCTION</scope>
    <source>
        <strain>129</strain>
    </source>
</reference>
<reference key="2">
    <citation type="journal article" date="2004" name="DNA Res.">
        <title>Prediction of the coding sequences of mouse homologues of KIAA gene: IV. The complete nucleotide sequences of 500 mouse KIAA-homologous cDNAs identified by screening of terminal sequences of cDNA clones randomly sampled from size-fractionated libraries.</title>
        <authorList>
            <person name="Okazaki N."/>
            <person name="Kikuno R."/>
            <person name="Ohara R."/>
            <person name="Inamoto S."/>
            <person name="Koseki H."/>
            <person name="Hiraoka S."/>
            <person name="Saga Y."/>
            <person name="Seino S."/>
            <person name="Nishimura M."/>
            <person name="Kaisho T."/>
            <person name="Hoshino K."/>
            <person name="Kitamura H."/>
            <person name="Nagase T."/>
            <person name="Ohara O."/>
            <person name="Koga H."/>
        </authorList>
    </citation>
    <scope>NUCLEOTIDE SEQUENCE [LARGE SCALE MRNA] (ISOFORM 2)</scope>
    <source>
        <tissue>Embryonic intestine</tissue>
    </source>
</reference>
<reference key="3">
    <citation type="journal article" date="2004" name="Genome Res.">
        <title>The status, quality, and expansion of the NIH full-length cDNA project: the Mammalian Gene Collection (MGC).</title>
        <authorList>
            <consortium name="The MGC Project Team"/>
        </authorList>
    </citation>
    <scope>NUCLEOTIDE SEQUENCE [LARGE SCALE MRNA] (ISOFORM 3)</scope>
    <source>
        <strain>FVB/N</strain>
        <tissue>Mammary gland</tissue>
        <tissue>Salivary gland</tissue>
    </source>
</reference>
<reference key="4">
    <citation type="journal article" date="2005" name="Science">
        <title>The transcriptional landscape of the mammalian genome.</title>
        <authorList>
            <person name="Carninci P."/>
            <person name="Kasukawa T."/>
            <person name="Katayama S."/>
            <person name="Gough J."/>
            <person name="Frith M.C."/>
            <person name="Maeda N."/>
            <person name="Oyama R."/>
            <person name="Ravasi T."/>
            <person name="Lenhard B."/>
            <person name="Wells C."/>
            <person name="Kodzius R."/>
            <person name="Shimokawa K."/>
            <person name="Bajic V.B."/>
            <person name="Brenner S.E."/>
            <person name="Batalov S."/>
            <person name="Forrest A.R."/>
            <person name="Zavolan M."/>
            <person name="Davis M.J."/>
            <person name="Wilming L.G."/>
            <person name="Aidinis V."/>
            <person name="Allen J.E."/>
            <person name="Ambesi-Impiombato A."/>
            <person name="Apweiler R."/>
            <person name="Aturaliya R.N."/>
            <person name="Bailey T.L."/>
            <person name="Bansal M."/>
            <person name="Baxter L."/>
            <person name="Beisel K.W."/>
            <person name="Bersano T."/>
            <person name="Bono H."/>
            <person name="Chalk A.M."/>
            <person name="Chiu K.P."/>
            <person name="Choudhary V."/>
            <person name="Christoffels A."/>
            <person name="Clutterbuck D.R."/>
            <person name="Crowe M.L."/>
            <person name="Dalla E."/>
            <person name="Dalrymple B.P."/>
            <person name="de Bono B."/>
            <person name="Della Gatta G."/>
            <person name="di Bernardo D."/>
            <person name="Down T."/>
            <person name="Engstrom P."/>
            <person name="Fagiolini M."/>
            <person name="Faulkner G."/>
            <person name="Fletcher C.F."/>
            <person name="Fukushima T."/>
            <person name="Furuno M."/>
            <person name="Futaki S."/>
            <person name="Gariboldi M."/>
            <person name="Georgii-Hemming P."/>
            <person name="Gingeras T.R."/>
            <person name="Gojobori T."/>
            <person name="Green R.E."/>
            <person name="Gustincich S."/>
            <person name="Harbers M."/>
            <person name="Hayashi Y."/>
            <person name="Hensch T.K."/>
            <person name="Hirokawa N."/>
            <person name="Hill D."/>
            <person name="Huminiecki L."/>
            <person name="Iacono M."/>
            <person name="Ikeo K."/>
            <person name="Iwama A."/>
            <person name="Ishikawa T."/>
            <person name="Jakt M."/>
            <person name="Kanapin A."/>
            <person name="Katoh M."/>
            <person name="Kawasawa Y."/>
            <person name="Kelso J."/>
            <person name="Kitamura H."/>
            <person name="Kitano H."/>
            <person name="Kollias G."/>
            <person name="Krishnan S.P."/>
            <person name="Kruger A."/>
            <person name="Kummerfeld S.K."/>
            <person name="Kurochkin I.V."/>
            <person name="Lareau L.F."/>
            <person name="Lazarevic D."/>
            <person name="Lipovich L."/>
            <person name="Liu J."/>
            <person name="Liuni S."/>
            <person name="McWilliam S."/>
            <person name="Madan Babu M."/>
            <person name="Madera M."/>
            <person name="Marchionni L."/>
            <person name="Matsuda H."/>
            <person name="Matsuzawa S."/>
            <person name="Miki H."/>
            <person name="Mignone F."/>
            <person name="Miyake S."/>
            <person name="Morris K."/>
            <person name="Mottagui-Tabar S."/>
            <person name="Mulder N."/>
            <person name="Nakano N."/>
            <person name="Nakauchi H."/>
            <person name="Ng P."/>
            <person name="Nilsson R."/>
            <person name="Nishiguchi S."/>
            <person name="Nishikawa S."/>
            <person name="Nori F."/>
            <person name="Ohara O."/>
            <person name="Okazaki Y."/>
            <person name="Orlando V."/>
            <person name="Pang K.C."/>
            <person name="Pavan W.J."/>
            <person name="Pavesi G."/>
            <person name="Pesole G."/>
            <person name="Petrovsky N."/>
            <person name="Piazza S."/>
            <person name="Reed J."/>
            <person name="Reid J.F."/>
            <person name="Ring B.Z."/>
            <person name="Ringwald M."/>
            <person name="Rost B."/>
            <person name="Ruan Y."/>
            <person name="Salzberg S.L."/>
            <person name="Sandelin A."/>
            <person name="Schneider C."/>
            <person name="Schoenbach C."/>
            <person name="Sekiguchi K."/>
            <person name="Semple C.A."/>
            <person name="Seno S."/>
            <person name="Sessa L."/>
            <person name="Sheng Y."/>
            <person name="Shibata Y."/>
            <person name="Shimada H."/>
            <person name="Shimada K."/>
            <person name="Silva D."/>
            <person name="Sinclair B."/>
            <person name="Sperling S."/>
            <person name="Stupka E."/>
            <person name="Sugiura K."/>
            <person name="Sultana R."/>
            <person name="Takenaka Y."/>
            <person name="Taki K."/>
            <person name="Tammoja K."/>
            <person name="Tan S.L."/>
            <person name="Tang S."/>
            <person name="Taylor M.S."/>
            <person name="Tegner J."/>
            <person name="Teichmann S.A."/>
            <person name="Ueda H.R."/>
            <person name="van Nimwegen E."/>
            <person name="Verardo R."/>
            <person name="Wei C.L."/>
            <person name="Yagi K."/>
            <person name="Yamanishi H."/>
            <person name="Zabarovsky E."/>
            <person name="Zhu S."/>
            <person name="Zimmer A."/>
            <person name="Hide W."/>
            <person name="Bult C."/>
            <person name="Grimmond S.M."/>
            <person name="Teasdale R.D."/>
            <person name="Liu E.T."/>
            <person name="Brusic V."/>
            <person name="Quackenbush J."/>
            <person name="Wahlestedt C."/>
            <person name="Mattick J.S."/>
            <person name="Hume D.A."/>
            <person name="Kai C."/>
            <person name="Sasaki D."/>
            <person name="Tomaru Y."/>
            <person name="Fukuda S."/>
            <person name="Kanamori-Katayama M."/>
            <person name="Suzuki M."/>
            <person name="Aoki J."/>
            <person name="Arakawa T."/>
            <person name="Iida J."/>
            <person name="Imamura K."/>
            <person name="Itoh M."/>
            <person name="Kato T."/>
            <person name="Kawaji H."/>
            <person name="Kawagashira N."/>
            <person name="Kawashima T."/>
            <person name="Kojima M."/>
            <person name="Kondo S."/>
            <person name="Konno H."/>
            <person name="Nakano K."/>
            <person name="Ninomiya N."/>
            <person name="Nishio T."/>
            <person name="Okada M."/>
            <person name="Plessy C."/>
            <person name="Shibata K."/>
            <person name="Shiraki T."/>
            <person name="Suzuki S."/>
            <person name="Tagami M."/>
            <person name="Waki K."/>
            <person name="Watahiki A."/>
            <person name="Okamura-Oho Y."/>
            <person name="Suzuki H."/>
            <person name="Kawai J."/>
            <person name="Hayashizaki Y."/>
        </authorList>
    </citation>
    <scope>NUCLEOTIDE SEQUENCE [LARGE SCALE MRNA] OF 1-306</scope>
    <source>
        <strain>C57BL/6J</strain>
        <tissue>Eye</tissue>
    </source>
</reference>
<reference key="5">
    <citation type="journal article" date="2004" name="J. Biol. Chem.">
        <title>Nucling recruits Apaf-1/pro-caspase-9 complex for the induction of stress-induced apoptosis.</title>
        <authorList>
            <person name="Sakai T."/>
            <person name="Liu L."/>
            <person name="Teng X."/>
            <person name="Mukai-Sakai R."/>
            <person name="Shimada H."/>
            <person name="Kaji R."/>
            <person name="Mitani T."/>
            <person name="Matsumoto M."/>
            <person name="Toida K."/>
            <person name="Ishimura K."/>
            <person name="Shishido Y."/>
            <person name="Mak T.W."/>
            <person name="Fukui K."/>
        </authorList>
    </citation>
    <scope>FUNCTION</scope>
    <scope>INTERACTION WITH APAF1</scope>
</reference>
<reference key="6">
    <citation type="journal article" date="2004" name="Biochem. J.">
        <title>Nucling mediates apoptosis by inhibiting expression of galectin-3 through interference with nuclear factor kappaB signalling.</title>
        <authorList>
            <person name="Liu L."/>
            <person name="Sakai T."/>
            <person name="Sano N."/>
            <person name="Fukui K."/>
        </authorList>
    </citation>
    <scope>FUNCTION</scope>
    <scope>INTERACTION WITH LGALS3</scope>
    <scope>DISRUPTION PHENOTYPE</scope>
</reference>
<reference key="7">
    <citation type="journal article" date="2009" name="Immunity">
        <title>The phagosomal proteome in interferon-gamma-activated macrophages.</title>
        <authorList>
            <person name="Trost M."/>
            <person name="English L."/>
            <person name="Lemieux S."/>
            <person name="Courcelles M."/>
            <person name="Desjardins M."/>
            <person name="Thibault P."/>
        </authorList>
    </citation>
    <scope>PHOSPHORYLATION [LARGE SCALE ANALYSIS] AT SER-280</scope>
    <scope>IDENTIFICATION BY MASS SPECTROMETRY [LARGE SCALE ANALYSIS]</scope>
</reference>
<reference key="8">
    <citation type="journal article" date="2010" name="Cell">
        <title>A tissue-specific atlas of mouse protein phosphorylation and expression.</title>
        <authorList>
            <person name="Huttlin E.L."/>
            <person name="Jedrychowski M.P."/>
            <person name="Elias J.E."/>
            <person name="Goswami T."/>
            <person name="Rad R."/>
            <person name="Beausoleil S.A."/>
            <person name="Villen J."/>
            <person name="Haas W."/>
            <person name="Sowa M.E."/>
            <person name="Gygi S.P."/>
        </authorList>
    </citation>
    <scope>PHOSPHORYLATION [LARGE SCALE ANALYSIS] AT SER-280</scope>
    <scope>IDENTIFICATION BY MASS SPECTROMETRY [LARGE SCALE ANALYSIS]</scope>
    <source>
        <tissue>Brown adipose tissue</tissue>
        <tissue>Kidney</tissue>
        <tissue>Lung</tissue>
        <tissue>Pancreas</tissue>
        <tissue>Testis</tissue>
    </source>
</reference>
<reference key="9">
    <citation type="journal article" date="2013" name="Biochem. Biophys. Res. Commun.">
        <title>Small GTPase Rab39A interacts with UACA and regulates the retinoic acid-induced neurite morphology of Neuro2A cells.</title>
        <authorList>
            <person name="Mori Y."/>
            <person name="Matsui T."/>
            <person name="Omote D."/>
            <person name="Fukuda M."/>
        </authorList>
    </citation>
    <scope>FUNCTION</scope>
    <scope>INTERACTION WITH RAB39A</scope>
</reference>
<keyword id="KW-0007">Acetylation</keyword>
<keyword id="KW-0025">Alternative splicing</keyword>
<keyword id="KW-0040">ANK repeat</keyword>
<keyword id="KW-0175">Coiled coil</keyword>
<keyword id="KW-0963">Cytoplasm</keyword>
<keyword id="KW-0206">Cytoskeleton</keyword>
<keyword id="KW-0539">Nucleus</keyword>
<keyword id="KW-0597">Phosphoprotein</keyword>
<keyword id="KW-1185">Reference proteome</keyword>
<keyword id="KW-0677">Repeat</keyword>
<organism>
    <name type="scientific">Mus musculus</name>
    <name type="common">Mouse</name>
    <dbReference type="NCBI Taxonomy" id="10090"/>
    <lineage>
        <taxon>Eukaryota</taxon>
        <taxon>Metazoa</taxon>
        <taxon>Chordata</taxon>
        <taxon>Craniata</taxon>
        <taxon>Vertebrata</taxon>
        <taxon>Euteleostomi</taxon>
        <taxon>Mammalia</taxon>
        <taxon>Eutheria</taxon>
        <taxon>Euarchontoglires</taxon>
        <taxon>Glires</taxon>
        <taxon>Rodentia</taxon>
        <taxon>Myomorpha</taxon>
        <taxon>Muroidea</taxon>
        <taxon>Muridae</taxon>
        <taxon>Murinae</taxon>
        <taxon>Mus</taxon>
        <taxon>Mus</taxon>
    </lineage>
</organism>
<accession>Q8CGB3</accession>
<accession>Q69ZG3</accession>
<accession>Q7TN77</accession>
<accession>Q8BJC8</accession>
<name>UACA_MOUSE</name>
<gene>
    <name type="primary">Uaca</name>
    <name type="synonym">Kiaa1561</name>
</gene>
<proteinExistence type="evidence at protein level"/>
<sequence length="1411" mass="160813">MKSLKSRLWKQDAPGPTSPSSPTAVASTQSAEWNKYDDRLMKAAERGDVEKVSSILAKKGVHPGKLDVEGRSAFHVVASKGNLECLNAILTHGIDVATRDSAGRNALHLAAKYGHALCLQKLLQYNCPTEHVDLQGRTALHDAVMADCPSSIQLLCDHGASVNAKDIDGRTPLVLATQMCRPTICQLLIDRGADVNSRDKQNRTALMLGCEYGCRDAVEVLVKNGADLTLLDALGHDSSYYARIGDNLDILNLLKTASENTNKGRELWRKGPPLQQRNLSHTQDEGSVKSTQREQREPHSFQDLEIENEDLREKLRKIQQEQRILLDKVNGLQLQLNEEVMVADDLESEREKPKSLLAAKEKQHEESLRTIEALKNRFKYFESDHPGPGSYPSNRKEDMLHKQGQMYTTEPQCASPGIPPHMHSRSMLRPLELSLPSQTSYSENEILKKELETLRTYYDSAKQDRLKFQNELAHKVAECKALALECERVKEDSDEQIKQLEDALKDVQKRMYESEGKVKQMQTHFLALKEHLTNEAATGSHRIIEELREQLKDLKGKYEGASAEVGKLRSQIKQSEMLVGEFKRDEGRLVEENKRLQKECGTCEVELERRGRRVVELEGQLKELGAKLALSVPTEKFESMKSSLSNDINEKVKRLAEVGRDYESAQGEIRQLKRDLESVRAQHIRPEEHEQLRSRLEQKSGELGKKVSELTLKNQTLQKDVEKLHADNKLLNQQVHSLTVEMKTRYVPLRVSEEMKRSHDVNVEDLNKKLSEATQRYAEKKQEAERLLAENDKLTKNVSRLEAVFVAPEKHEKELMGLKSNIAELKKQLSELNKKCGEGQEKIRALMSENSSLKKTLSSQYVPAKTHEEVKASLNSTVEKTNRALLEAKKRFDDTSQEVSKLRDENEVLRRNLENVQNQMKADYVSLEEHSRRMSTVSQSLKEAQEANAAILADHRQGQEEIVSLHAEIKAQKKELDTIQECIKLKYAPLARLEECERKFKATEKGLKEQLSEQTHKCRQRDEEVKKGKQENERLRADLAALQKELQDRNALAEEAREAERALSGKADELSKQLKDLSQKYSDVKSEREKLVEEKAKQASEILAAQNLLQKQPVPLEQVEALKKSLNGTIEQLKEELRSKQRCLEREQQTVSQLQQLLENQKNSSVTLAEHLKLKEALEKEVGIMKASLREKEEESQKKTKEVSKLQTEVQTTKQALKNLETREVVDMSKYKATKNDLETQISNLNDKLASLNRKYDQACEEKVSAKDEKELLHLSIEQEIRDQKERCDKSLTTIMELQQRIQESAKQIEAKDNKITELLNDVERLKQALNGLSQLTYSSGSPTKRQSQLVDTLQQRVRDLQQQLADADRQHQEVIAIYRTHLLSAAQGHMDEDVQAALLQIIQMRQGLVC</sequence>
<dbReference type="EMBL" id="AB030647">
    <property type="protein sequence ID" value="BAC78213.1"/>
    <property type="status" value="ALT_INIT"/>
    <property type="molecule type" value="mRNA"/>
</dbReference>
<dbReference type="EMBL" id="AK173203">
    <property type="protein sequence ID" value="BAD32481.1"/>
    <property type="status" value="ALT_INIT"/>
    <property type="molecule type" value="mRNA"/>
</dbReference>
<dbReference type="EMBL" id="BC042415">
    <property type="protein sequence ID" value="AAH42415.1"/>
    <property type="molecule type" value="mRNA"/>
</dbReference>
<dbReference type="EMBL" id="AK087466">
    <property type="protein sequence ID" value="BAC39886.1"/>
    <property type="molecule type" value="mRNA"/>
</dbReference>
<dbReference type="CCDS" id="CCDS23259.1">
    <molecule id="Q8CGB3-3"/>
</dbReference>
<dbReference type="CCDS" id="CCDS90590.1">
    <molecule id="Q8CGB3-1"/>
</dbReference>
<dbReference type="RefSeq" id="NP_082559.1">
    <property type="nucleotide sequence ID" value="NM_028283.2"/>
</dbReference>
<dbReference type="RefSeq" id="XP_017169098.1">
    <property type="nucleotide sequence ID" value="XM_017313609.1"/>
</dbReference>
<dbReference type="SMR" id="Q8CGB3"/>
<dbReference type="BioGRID" id="215442">
    <property type="interactions" value="9"/>
</dbReference>
<dbReference type="FunCoup" id="Q8CGB3">
    <property type="interactions" value="845"/>
</dbReference>
<dbReference type="IntAct" id="Q8CGB3">
    <property type="interactions" value="5"/>
</dbReference>
<dbReference type="STRING" id="10090.ENSMUSP00000062047"/>
<dbReference type="GlyGen" id="Q8CGB3">
    <property type="glycosylation" value="2 sites, 1 O-linked glycan (1 site)"/>
</dbReference>
<dbReference type="iPTMnet" id="Q8CGB3"/>
<dbReference type="PhosphoSitePlus" id="Q8CGB3"/>
<dbReference type="jPOST" id="Q8CGB3"/>
<dbReference type="PaxDb" id="10090-ENSMUSP00000062047"/>
<dbReference type="PeptideAtlas" id="Q8CGB3"/>
<dbReference type="ProteomicsDB" id="297767">
    <molecule id="Q8CGB3-1"/>
</dbReference>
<dbReference type="ProteomicsDB" id="297768">
    <molecule id="Q8CGB3-2"/>
</dbReference>
<dbReference type="ProteomicsDB" id="297769">
    <molecule id="Q8CGB3-3"/>
</dbReference>
<dbReference type="Pumba" id="Q8CGB3"/>
<dbReference type="DNASU" id="72565"/>
<dbReference type="GeneID" id="72565"/>
<dbReference type="KEGG" id="mmu:72565"/>
<dbReference type="UCSC" id="uc009pzi.1">
    <molecule id="Q8CGB3-3"/>
    <property type="organism name" value="mouse"/>
</dbReference>
<dbReference type="UCSC" id="uc009pzk.1">
    <molecule id="Q8CGB3-1"/>
    <property type="organism name" value="mouse"/>
</dbReference>
<dbReference type="AGR" id="MGI:1919815"/>
<dbReference type="CTD" id="55075"/>
<dbReference type="MGI" id="MGI:1919815">
    <property type="gene designation" value="Uaca"/>
</dbReference>
<dbReference type="eggNOG" id="ENOG502QPYN">
    <property type="taxonomic scope" value="Eukaryota"/>
</dbReference>
<dbReference type="InParanoid" id="Q8CGB3"/>
<dbReference type="OrthoDB" id="341259at2759"/>
<dbReference type="PhylomeDB" id="Q8CGB3"/>
<dbReference type="TreeFam" id="TF331274"/>
<dbReference type="Reactome" id="R-MMU-9013407">
    <property type="pathway name" value="RHOH GTPase cycle"/>
</dbReference>
<dbReference type="BioGRID-ORCS" id="72565">
    <property type="hits" value="2 hits in 77 CRISPR screens"/>
</dbReference>
<dbReference type="ChiTaRS" id="Uaca">
    <property type="organism name" value="mouse"/>
</dbReference>
<dbReference type="PRO" id="PR:Q8CGB3"/>
<dbReference type="Proteomes" id="UP000000589">
    <property type="component" value="Unplaced"/>
</dbReference>
<dbReference type="RNAct" id="Q8CGB3">
    <property type="molecule type" value="protein"/>
</dbReference>
<dbReference type="GO" id="GO:0043293">
    <property type="term" value="C:apoptosome"/>
    <property type="evidence" value="ECO:0000314"/>
    <property type="project" value="MGI"/>
</dbReference>
<dbReference type="GO" id="GO:0005737">
    <property type="term" value="C:cytoplasm"/>
    <property type="evidence" value="ECO:0000314"/>
    <property type="project" value="MGI"/>
</dbReference>
<dbReference type="GO" id="GO:0005856">
    <property type="term" value="C:cytoskeleton"/>
    <property type="evidence" value="ECO:0007669"/>
    <property type="project" value="UniProtKB-SubCell"/>
</dbReference>
<dbReference type="GO" id="GO:0005829">
    <property type="term" value="C:cytosol"/>
    <property type="evidence" value="ECO:0000314"/>
    <property type="project" value="MGI"/>
</dbReference>
<dbReference type="GO" id="GO:0016020">
    <property type="term" value="C:membrane"/>
    <property type="evidence" value="ECO:0000314"/>
    <property type="project" value="MGI"/>
</dbReference>
<dbReference type="GO" id="GO:0005635">
    <property type="term" value="C:nuclear envelope"/>
    <property type="evidence" value="ECO:0000314"/>
    <property type="project" value="MGI"/>
</dbReference>
<dbReference type="GO" id="GO:0005634">
    <property type="term" value="C:nucleus"/>
    <property type="evidence" value="ECO:0000314"/>
    <property type="project" value="MGI"/>
</dbReference>
<dbReference type="GO" id="GO:0048471">
    <property type="term" value="C:perinuclear region of cytoplasm"/>
    <property type="evidence" value="ECO:0000314"/>
    <property type="project" value="MGI"/>
</dbReference>
<dbReference type="GO" id="GO:0003779">
    <property type="term" value="F:actin binding"/>
    <property type="evidence" value="ECO:0007669"/>
    <property type="project" value="InterPro"/>
</dbReference>
<dbReference type="GO" id="GO:0140416">
    <property type="term" value="F:transcription regulator inhibitor activity"/>
    <property type="evidence" value="ECO:0000315"/>
    <property type="project" value="MGI"/>
</dbReference>
<dbReference type="GO" id="GO:0008630">
    <property type="term" value="P:intrinsic apoptotic signaling pathway in response to DNA damage"/>
    <property type="evidence" value="ECO:0000315"/>
    <property type="project" value="MGI"/>
</dbReference>
<dbReference type="GO" id="GO:0008631">
    <property type="term" value="P:intrinsic apoptotic signaling pathway in response to oxidative stress"/>
    <property type="evidence" value="ECO:0000315"/>
    <property type="project" value="MGI"/>
</dbReference>
<dbReference type="GO" id="GO:0043124">
    <property type="term" value="P:negative regulation of canonical NF-kappaB signal transduction"/>
    <property type="evidence" value="ECO:0000315"/>
    <property type="project" value="MGI"/>
</dbReference>
<dbReference type="GO" id="GO:0050728">
    <property type="term" value="P:negative regulation of inflammatory response"/>
    <property type="evidence" value="ECO:0000315"/>
    <property type="project" value="MGI"/>
</dbReference>
<dbReference type="GO" id="GO:1901223">
    <property type="term" value="P:negative regulation of non-canonical NF-kappaB signal transduction"/>
    <property type="evidence" value="ECO:0000315"/>
    <property type="project" value="MGI"/>
</dbReference>
<dbReference type="GO" id="GO:0043065">
    <property type="term" value="P:positive regulation of apoptotic process"/>
    <property type="evidence" value="ECO:0000314"/>
    <property type="project" value="MGI"/>
</dbReference>
<dbReference type="GO" id="GO:0042307">
    <property type="term" value="P:positive regulation of protein import into nucleus"/>
    <property type="evidence" value="ECO:0000315"/>
    <property type="project" value="MGI"/>
</dbReference>
<dbReference type="GO" id="GO:0006606">
    <property type="term" value="P:protein import into nucleus"/>
    <property type="evidence" value="ECO:0000315"/>
    <property type="project" value="MGI"/>
</dbReference>
<dbReference type="GO" id="GO:0009411">
    <property type="term" value="P:response to UV"/>
    <property type="evidence" value="ECO:0000315"/>
    <property type="project" value="MGI"/>
</dbReference>
<dbReference type="FunFam" id="1.25.40.20:FF:000083">
    <property type="entry name" value="Uveal autoantigen with coiled-coil domains and ankyrin repeats"/>
    <property type="match status" value="1"/>
</dbReference>
<dbReference type="FunFam" id="1.25.40.20:FF:000287">
    <property type="entry name" value="Uveal autoantigen with coiled-coil domains and ankyrin repeats"/>
    <property type="match status" value="1"/>
</dbReference>
<dbReference type="Gene3D" id="1.25.40.20">
    <property type="entry name" value="Ankyrin repeat-containing domain"/>
    <property type="match status" value="2"/>
</dbReference>
<dbReference type="Gene3D" id="1.20.5.1160">
    <property type="entry name" value="Vasodilator-stimulated phosphoprotein"/>
    <property type="match status" value="1"/>
</dbReference>
<dbReference type="InterPro" id="IPR002110">
    <property type="entry name" value="Ankyrin_rpt"/>
</dbReference>
<dbReference type="InterPro" id="IPR036770">
    <property type="entry name" value="Ankyrin_rpt-contain_sf"/>
</dbReference>
<dbReference type="InterPro" id="IPR042420">
    <property type="entry name" value="RAI14/UACA"/>
</dbReference>
<dbReference type="InterPro" id="IPR000727">
    <property type="entry name" value="T_SNARE_dom"/>
</dbReference>
<dbReference type="PANTHER" id="PTHR24129">
    <property type="entry name" value="ANKYCORBIN"/>
    <property type="match status" value="1"/>
</dbReference>
<dbReference type="PANTHER" id="PTHR24129:SF1">
    <property type="entry name" value="UVEAL AUTOANTIGEN WITH COILED-COIL DOMAINS AND ANKYRIN REPEATS"/>
    <property type="match status" value="1"/>
</dbReference>
<dbReference type="Pfam" id="PF00023">
    <property type="entry name" value="Ank"/>
    <property type="match status" value="1"/>
</dbReference>
<dbReference type="Pfam" id="PF12796">
    <property type="entry name" value="Ank_2"/>
    <property type="match status" value="2"/>
</dbReference>
<dbReference type="PRINTS" id="PR01415">
    <property type="entry name" value="ANKYRIN"/>
</dbReference>
<dbReference type="SMART" id="SM00248">
    <property type="entry name" value="ANK"/>
    <property type="match status" value="6"/>
</dbReference>
<dbReference type="SUPFAM" id="SSF48403">
    <property type="entry name" value="Ankyrin repeat"/>
    <property type="match status" value="1"/>
</dbReference>
<dbReference type="SUPFAM" id="SSF90257">
    <property type="entry name" value="Myosin rod fragments"/>
    <property type="match status" value="1"/>
</dbReference>
<dbReference type="PROSITE" id="PS50297">
    <property type="entry name" value="ANK_REP_REGION"/>
    <property type="match status" value="1"/>
</dbReference>
<dbReference type="PROSITE" id="PS50088">
    <property type="entry name" value="ANK_REPEAT"/>
    <property type="match status" value="5"/>
</dbReference>
<dbReference type="PROSITE" id="PS50192">
    <property type="entry name" value="T_SNARE"/>
    <property type="match status" value="1"/>
</dbReference>
<evidence type="ECO:0000250" key="1">
    <source>
        <dbReference type="UniProtKB" id="Q8HYY4"/>
    </source>
</evidence>
<evidence type="ECO:0000250" key="2">
    <source>
        <dbReference type="UniProtKB" id="Q9BZF9"/>
    </source>
</evidence>
<evidence type="ECO:0000255" key="3"/>
<evidence type="ECO:0000256" key="4">
    <source>
        <dbReference type="SAM" id="MobiDB-lite"/>
    </source>
</evidence>
<evidence type="ECO:0000269" key="5">
    <source>
    </source>
</evidence>
<evidence type="ECO:0000269" key="6">
    <source>
    </source>
</evidence>
<evidence type="ECO:0000269" key="7">
    <source>
    </source>
</evidence>
<evidence type="ECO:0000269" key="8">
    <source>
    </source>
</evidence>
<evidence type="ECO:0000303" key="9">
    <source>
    </source>
</evidence>
<evidence type="ECO:0000303" key="10">
    <source>
    </source>
</evidence>
<evidence type="ECO:0000305" key="11"/>
<evidence type="ECO:0007744" key="12">
    <source>
    </source>
</evidence>
<evidence type="ECO:0007744" key="13">
    <source>
    </source>
</evidence>
<feature type="chain" id="PRO_0000231651" description="Uveal autoantigen with coiled-coil domains and ankyrin repeats">
    <location>
        <begin position="1"/>
        <end position="1411"/>
    </location>
</feature>
<feature type="repeat" description="ANK 1">
    <location>
        <begin position="69"/>
        <end position="98"/>
    </location>
</feature>
<feature type="repeat" description="ANK 2">
    <location>
        <begin position="102"/>
        <end position="131"/>
    </location>
</feature>
<feature type="repeat" description="ANK 3">
    <location>
        <begin position="135"/>
        <end position="164"/>
    </location>
</feature>
<feature type="repeat" description="ANK 4">
    <location>
        <begin position="168"/>
        <end position="197"/>
    </location>
</feature>
<feature type="repeat" description="ANK 5">
    <location>
        <begin position="201"/>
        <end position="230"/>
    </location>
</feature>
<feature type="repeat" description="ANK 6">
    <location>
        <begin position="234"/>
        <end position="263"/>
    </location>
</feature>
<feature type="region of interest" description="Disordered" evidence="4">
    <location>
        <begin position="1"/>
        <end position="30"/>
    </location>
</feature>
<feature type="region of interest" description="Disordered" evidence="4">
    <location>
        <begin position="263"/>
        <end position="301"/>
    </location>
</feature>
<feature type="region of interest" description="Disordered" evidence="4">
    <location>
        <begin position="1006"/>
        <end position="1031"/>
    </location>
</feature>
<feature type="coiled-coil region" evidence="3">
    <location>
        <begin position="299"/>
        <end position="379"/>
    </location>
</feature>
<feature type="coiled-coil region" evidence="3">
    <location>
        <begin position="442"/>
        <end position="624"/>
    </location>
</feature>
<feature type="coiled-coil region" evidence="3">
    <location>
        <begin position="652"/>
        <end position="1380"/>
    </location>
</feature>
<feature type="compositionally biased region" description="Low complexity" evidence="4">
    <location>
        <begin position="13"/>
        <end position="30"/>
    </location>
</feature>
<feature type="compositionally biased region" description="Basic and acidic residues" evidence="4">
    <location>
        <begin position="282"/>
        <end position="301"/>
    </location>
</feature>
<feature type="modified residue" description="N-acetylmethionine" evidence="2">
    <location>
        <position position="1"/>
    </location>
</feature>
<feature type="modified residue" description="Phosphoserine" evidence="12 13">
    <location>
        <position position="280"/>
    </location>
</feature>
<feature type="splice variant" id="VSP_017874" description="In isoform 2." evidence="9">
    <location>
        <begin position="1"/>
        <end position="398"/>
    </location>
</feature>
<feature type="splice variant" id="VSP_017875" description="In isoform 3." evidence="10">
    <original>G</original>
    <variation>GGG</variation>
    <location>
        <position position="264"/>
    </location>
</feature>
<feature type="sequence conflict" description="In Ref. 3; AAH42415." evidence="11" ref="3">
    <original>V</original>
    <variation>A</variation>
    <location>
        <position position="144"/>
    </location>
</feature>
<feature type="sequence conflict" description="In Ref. 3; AAH42415." evidence="11" ref="3">
    <original>P</original>
    <variation>L</variation>
    <location>
        <position position="353"/>
    </location>
</feature>
<feature type="sequence conflict" description="In Ref. 3; AAH42415." evidence="11" ref="3">
    <original>R</original>
    <variation>K</variation>
    <location>
        <position position="757"/>
    </location>
</feature>
<feature type="sequence conflict" description="In Ref. 3; AAH42415." evidence="11" ref="3">
    <original>A</original>
    <variation>T</variation>
    <location>
        <position position="778"/>
    </location>
</feature>
<comment type="function">
    <text evidence="6 7">Regulates APAF1 expression and plays an important role in the regulation of stress-induced apoptosis. Promotes apoptosis by regulating three pathways, apoptosome up-regulation, LGALS3/galectin-3 down-regulation and NF-kappa-B inactivation. Regulates the redistribution of APAF1 into the nucleus after proapoptotic stress. Down-regulates the expression of LGALS3 by inhibiting NFKB1.</text>
</comment>
<comment type="function">
    <text evidence="1 8">Modulates isoactin dynamics to regulate the morphological alterations required for cell growth and motility. Interaction with ARF6 may modulate cell shape and motility after injury (By similarity). May be involved in multiple neurite formation (PubMed:23624502).</text>
</comment>
<comment type="subunit">
    <text evidence="6 7 8">Component of the apoptosome complex, composed of APAF1, pro-caspase-9 and UACA. In the complex, it probably interacts directly with APAF1. Interacts with LGALS3, ARF6 and ACTB. Interacts with RAB39A.</text>
</comment>
<comment type="interaction">
    <interactant intactId="EBI-10767725">
        <id>Q8CGB3-3</id>
    </interactant>
    <interactant intactId="EBI-10767908">
        <id>Q8BHD0</id>
        <label>Rab39a</label>
    </interactant>
    <organismsDiffer>false</organismsDiffer>
    <experiments>3</experiments>
</comment>
<comment type="interaction">
    <interactant intactId="EBI-10767725">
        <id>Q8CGB3-3</id>
    </interactant>
    <interactant intactId="EBI-10767682">
        <id>Q8BHC1</id>
        <label>Rab39b</label>
    </interactant>
    <organismsDiffer>false</organismsDiffer>
    <experiments>4</experiments>
</comment>
<comment type="subcellular location">
    <subcellularLocation>
        <location evidence="5">Nucleus</location>
    </subcellularLocation>
    <subcellularLocation>
        <location evidence="5">Cytoplasm</location>
    </subcellularLocation>
    <subcellularLocation>
        <location evidence="5">Cytoplasm</location>
        <location evidence="5">Cytoskeleton</location>
    </subcellularLocation>
    <text>Expressed diffusely in cytoplasm.</text>
</comment>
<comment type="alternative products">
    <event type="alternative splicing"/>
    <isoform>
        <id>Q8CGB3-1</id>
        <name>1</name>
        <sequence type="displayed"/>
    </isoform>
    <isoform>
        <id>Q8CGB3-2</id>
        <name>2</name>
        <sequence type="described" ref="VSP_017874"/>
    </isoform>
    <isoform>
        <id>Q8CGB3-3</id>
        <name>3</name>
        <sequence type="described" ref="VSP_017875"/>
    </isoform>
</comment>
<comment type="tissue specificity">
    <text evidence="5">Highly expressed in heart, liver, kidney and testis. Weakly expressed in lung and skeletal muscle. Not expressed in brain and spleen.</text>
</comment>
<comment type="developmental stage">
    <text evidence="5">First detected at 9.5 dpc in heart at the edge of both sides of the common ventricular chamber and is then progressively increased and restricted to the myocardial wall of left common ventricular chamber of heart.</text>
</comment>
<comment type="induction">
    <text evidence="5">Up-regulated during cardiomyogenic differentiation. By apoptotic stress in a dose-dependent manner.</text>
</comment>
<comment type="disruption phenotype">
    <text evidence="6">Mice show a high incidence of inflammatory lesions in preputial glands. Cells around the lesions showed resistance to apoptosis.</text>
</comment>
<comment type="sequence caution" evidence="11">
    <conflict type="erroneous initiation">
        <sequence resource="EMBL-CDS" id="BAC78213"/>
    </conflict>
</comment>
<comment type="sequence caution" evidence="11">
    <conflict type="erroneous initiation">
        <sequence resource="EMBL-CDS" id="BAD32481"/>
    </conflict>
</comment>